<reference key="1">
    <citation type="journal article" date="1994" name="J. Bacteriol.">
        <title>Characterization of the Thermus thermophilus locus encoding peptide deformylase and methionyl-tRNA(fMet) formyltransferase.</title>
        <authorList>
            <person name="Meinnel T."/>
            <person name="Blanquet S."/>
        </authorList>
    </citation>
    <scope>NUCLEOTIDE SEQUENCE [GENOMIC DNA]</scope>
    <source>
        <strain>VK1</strain>
    </source>
</reference>
<feature type="chain" id="PRO_0000066191" description="YbbR-like domain-containing protein in def 5'region">
    <location>
        <begin position="1" status="less than"/>
        <end position="149"/>
    </location>
</feature>
<feature type="domain" description="YbbR-like">
    <location>
        <begin position="1"/>
        <end position="68"/>
    </location>
</feature>
<feature type="non-terminal residue">
    <location>
        <position position="1"/>
    </location>
</feature>
<proteinExistence type="predicted"/>
<accession>P43521</accession>
<protein>
    <recommendedName>
        <fullName>YbbR-like domain-containing protein in def 5'region</fullName>
    </recommendedName>
</protein>
<dbReference type="EMBL" id="X79087">
    <property type="protein sequence ID" value="CAA55694.1"/>
    <property type="molecule type" value="Genomic_DNA"/>
</dbReference>
<organism>
    <name type="scientific">Thermus thermophilus</name>
    <dbReference type="NCBI Taxonomy" id="274"/>
    <lineage>
        <taxon>Bacteria</taxon>
        <taxon>Thermotogati</taxon>
        <taxon>Deinococcota</taxon>
        <taxon>Deinococci</taxon>
        <taxon>Thermales</taxon>
        <taxon>Thermaceae</taxon>
        <taxon>Thermus</taxon>
    </lineage>
</organism>
<name>YDEF_THETH</name>
<sequence>IPVEVLAQGAWVLTDPAFVEAVGPESQVEAAVSAVGLDLGDEVVLFPLGPEGPLEGVELRPNRVRVVERREALFLKEVPLSLNPPPGRRLLDYAPKTVRLVGPREALEGLAGVTATLQEALGPGEVEVAVAPDLPPGSIPWDRFGCGLR</sequence>